<accession>Q2HWG0</accession>
<accession>A0A0P0XF50</accession>
<accession>Q6YZK8</accession>
<reference key="1">
    <citation type="journal article" date="2006" name="Gene">
        <title>Identification and characterization of cytokinin-signalling gene families in rice.</title>
        <authorList>
            <person name="Ito Y."/>
            <person name="Kurata N."/>
        </authorList>
    </citation>
    <scope>NUCLEOTIDE SEQUENCE [GENOMIC DNA]</scope>
    <scope>TISSUE SPECIFICITY</scope>
    <source>
        <strain>cv. Nipponbare</strain>
    </source>
</reference>
<reference key="2">
    <citation type="journal article" date="2007" name="Plant Cell Physiol.">
        <title>Overexpression of a type-A response regulator alters rice morphology and cytokinin metabolism.</title>
        <authorList>
            <person name="Hirose N."/>
            <person name="Makita N."/>
            <person name="Kojima M."/>
            <person name="Kamada-Nobusada T."/>
            <person name="Sakakibara H."/>
        </authorList>
    </citation>
    <scope>NUCLEOTIDE SEQUENCE [MRNA]</scope>
    <source>
        <strain>cv. Nipponbare</strain>
    </source>
</reference>
<reference key="3">
    <citation type="journal article" date="2005" name="Nature">
        <title>The map-based sequence of the rice genome.</title>
        <authorList>
            <consortium name="International rice genome sequencing project (IRGSP)"/>
        </authorList>
    </citation>
    <scope>NUCLEOTIDE SEQUENCE [LARGE SCALE GENOMIC DNA]</scope>
    <source>
        <strain>cv. Nipponbare</strain>
    </source>
</reference>
<reference key="4">
    <citation type="journal article" date="2008" name="Nucleic Acids Res.">
        <title>The rice annotation project database (RAP-DB): 2008 update.</title>
        <authorList>
            <consortium name="The rice annotation project (RAP)"/>
        </authorList>
    </citation>
    <scope>GENOME REANNOTATION</scope>
    <source>
        <strain>cv. Nipponbare</strain>
    </source>
</reference>
<reference key="5">
    <citation type="journal article" date="2013" name="Rice">
        <title>Improvement of the Oryza sativa Nipponbare reference genome using next generation sequence and optical map data.</title>
        <authorList>
            <person name="Kawahara Y."/>
            <person name="de la Bastide M."/>
            <person name="Hamilton J.P."/>
            <person name="Kanamori H."/>
            <person name="McCombie W.R."/>
            <person name="Ouyang S."/>
            <person name="Schwartz D.C."/>
            <person name="Tanaka T."/>
            <person name="Wu J."/>
            <person name="Zhou S."/>
            <person name="Childs K.L."/>
            <person name="Davidson R.M."/>
            <person name="Lin H."/>
            <person name="Quesada-Ocampo L."/>
            <person name="Vaillancourt B."/>
            <person name="Sakai H."/>
            <person name="Lee S.S."/>
            <person name="Kim J."/>
            <person name="Numa H."/>
            <person name="Itoh T."/>
            <person name="Buell C.R."/>
            <person name="Matsumoto T."/>
        </authorList>
    </citation>
    <scope>GENOME REANNOTATION</scope>
    <source>
        <strain>cv. Nipponbare</strain>
    </source>
</reference>
<reference key="6">
    <citation type="journal article" date="2005" name="PLoS Biol.">
        <title>The genomes of Oryza sativa: a history of duplications.</title>
        <authorList>
            <person name="Yu J."/>
            <person name="Wang J."/>
            <person name="Lin W."/>
            <person name="Li S."/>
            <person name="Li H."/>
            <person name="Zhou J."/>
            <person name="Ni P."/>
            <person name="Dong W."/>
            <person name="Hu S."/>
            <person name="Zeng C."/>
            <person name="Zhang J."/>
            <person name="Zhang Y."/>
            <person name="Li R."/>
            <person name="Xu Z."/>
            <person name="Li S."/>
            <person name="Li X."/>
            <person name="Zheng H."/>
            <person name="Cong L."/>
            <person name="Lin L."/>
            <person name="Yin J."/>
            <person name="Geng J."/>
            <person name="Li G."/>
            <person name="Shi J."/>
            <person name="Liu J."/>
            <person name="Lv H."/>
            <person name="Li J."/>
            <person name="Wang J."/>
            <person name="Deng Y."/>
            <person name="Ran L."/>
            <person name="Shi X."/>
            <person name="Wang X."/>
            <person name="Wu Q."/>
            <person name="Li C."/>
            <person name="Ren X."/>
            <person name="Wang J."/>
            <person name="Wang X."/>
            <person name="Li D."/>
            <person name="Liu D."/>
            <person name="Zhang X."/>
            <person name="Ji Z."/>
            <person name="Zhao W."/>
            <person name="Sun Y."/>
            <person name="Zhang Z."/>
            <person name="Bao J."/>
            <person name="Han Y."/>
            <person name="Dong L."/>
            <person name="Ji J."/>
            <person name="Chen P."/>
            <person name="Wu S."/>
            <person name="Liu J."/>
            <person name="Xiao Y."/>
            <person name="Bu D."/>
            <person name="Tan J."/>
            <person name="Yang L."/>
            <person name="Ye C."/>
            <person name="Zhang J."/>
            <person name="Xu J."/>
            <person name="Zhou Y."/>
            <person name="Yu Y."/>
            <person name="Zhang B."/>
            <person name="Zhuang S."/>
            <person name="Wei H."/>
            <person name="Liu B."/>
            <person name="Lei M."/>
            <person name="Yu H."/>
            <person name="Li Y."/>
            <person name="Xu H."/>
            <person name="Wei S."/>
            <person name="He X."/>
            <person name="Fang L."/>
            <person name="Zhang Z."/>
            <person name="Zhang Y."/>
            <person name="Huang X."/>
            <person name="Su Z."/>
            <person name="Tong W."/>
            <person name="Li J."/>
            <person name="Tong Z."/>
            <person name="Li S."/>
            <person name="Ye J."/>
            <person name="Wang L."/>
            <person name="Fang L."/>
            <person name="Lei T."/>
            <person name="Chen C.-S."/>
            <person name="Chen H.-C."/>
            <person name="Xu Z."/>
            <person name="Li H."/>
            <person name="Huang H."/>
            <person name="Zhang F."/>
            <person name="Xu H."/>
            <person name="Li N."/>
            <person name="Zhao C."/>
            <person name="Li S."/>
            <person name="Dong L."/>
            <person name="Huang Y."/>
            <person name="Li L."/>
            <person name="Xi Y."/>
            <person name="Qi Q."/>
            <person name="Li W."/>
            <person name="Zhang B."/>
            <person name="Hu W."/>
            <person name="Zhang Y."/>
            <person name="Tian X."/>
            <person name="Jiao Y."/>
            <person name="Liang X."/>
            <person name="Jin J."/>
            <person name="Gao L."/>
            <person name="Zheng W."/>
            <person name="Hao B."/>
            <person name="Liu S.-M."/>
            <person name="Wang W."/>
            <person name="Yuan L."/>
            <person name="Cao M."/>
            <person name="McDermott J."/>
            <person name="Samudrala R."/>
            <person name="Wang J."/>
            <person name="Wong G.K.-S."/>
            <person name="Yang H."/>
        </authorList>
    </citation>
    <scope>NUCLEOTIDE SEQUENCE [LARGE SCALE GENOMIC DNA]</scope>
    <source>
        <strain>cv. Nipponbare</strain>
    </source>
</reference>
<reference key="7">
    <citation type="journal article" date="2006" name="Plant Physiol.">
        <title>Whole-genome analysis of Oryza sativa reveals similar architecture of two-component signaling machinery with Arabidopsis.</title>
        <authorList>
            <person name="Pareek A."/>
            <person name="Singh A."/>
            <person name="Kumar M."/>
            <person name="Kushwaha H.R."/>
            <person name="Lynn A.M."/>
            <person name="Singla-Pareek S.L."/>
        </authorList>
    </citation>
    <scope>DISRUPTION PHENOTYPE</scope>
</reference>
<reference key="8">
    <citation type="journal article" date="2007" name="Plant Physiol.">
        <title>Nomenclature for two-component signaling elements of rice.</title>
        <authorList>
            <person name="Schaller G.E."/>
            <person name="Doi K."/>
            <person name="Hwang I."/>
            <person name="Kieber J.J."/>
            <person name="Khurana J.P."/>
            <person name="Kurata N."/>
            <person name="Mizuno T."/>
            <person name="Pareek A."/>
            <person name="Shiu S.H."/>
            <person name="Wu P."/>
            <person name="Yip W.K."/>
        </authorList>
    </citation>
    <scope>GENE FAMILY</scope>
    <scope>NOMENCLATURE</scope>
</reference>
<name>ORR13_ORYSJ</name>
<gene>
    <name evidence="7" type="primary">RR13</name>
    <name evidence="9" type="ordered locus">Os08g0358800</name>
    <name evidence="8" type="ordered locus">LOC_Os08g26990</name>
    <name evidence="10" type="ORF">OsJ_27037</name>
</gene>
<dbReference type="EMBL" id="BR000320">
    <property type="protein sequence ID" value="FAA00272.1"/>
    <property type="status" value="ALT_SEQ"/>
    <property type="molecule type" value="Genomic_DNA"/>
</dbReference>
<dbReference type="EMBL" id="AB249665">
    <property type="protein sequence ID" value="BAE79359.1"/>
    <property type="molecule type" value="mRNA"/>
</dbReference>
<dbReference type="EMBL" id="AP005523">
    <property type="protein sequence ID" value="BAD03775.1"/>
    <property type="status" value="ALT_SEQ"/>
    <property type="molecule type" value="Genomic_DNA"/>
</dbReference>
<dbReference type="EMBL" id="AP008214">
    <property type="protein sequence ID" value="BAH94264.1"/>
    <property type="status" value="ALT_SEQ"/>
    <property type="molecule type" value="Genomic_DNA"/>
</dbReference>
<dbReference type="EMBL" id="AP014964">
    <property type="protein sequence ID" value="BAT05088.1"/>
    <property type="molecule type" value="Genomic_DNA"/>
</dbReference>
<dbReference type="EMBL" id="CM000145">
    <property type="protein sequence ID" value="EAZ42468.1"/>
    <property type="status" value="ALT_SEQ"/>
    <property type="molecule type" value="Genomic_DNA"/>
</dbReference>
<dbReference type="RefSeq" id="XP_015649685.1">
    <property type="nucleotide sequence ID" value="XM_015794199.1"/>
</dbReference>
<dbReference type="SMR" id="Q2HWG0"/>
<dbReference type="FunCoup" id="Q2HWG0">
    <property type="interactions" value="28"/>
</dbReference>
<dbReference type="STRING" id="39947.Q2HWG0"/>
<dbReference type="PaxDb" id="39947-Q2HWG0"/>
<dbReference type="EnsemblPlants" id="Os08t0358800-02">
    <property type="protein sequence ID" value="Os08t0358800-02"/>
    <property type="gene ID" value="Os08g0358800"/>
</dbReference>
<dbReference type="Gramene" id="Os08t0358800-02">
    <property type="protein sequence ID" value="Os08t0358800-02"/>
    <property type="gene ID" value="Os08g0358800"/>
</dbReference>
<dbReference type="KEGG" id="dosa:Os08g0358800"/>
<dbReference type="HOGENOM" id="CLU_000445_69_5_1"/>
<dbReference type="InParanoid" id="Q2HWG0"/>
<dbReference type="OMA" id="HVDRHVI"/>
<dbReference type="OrthoDB" id="599780at2759"/>
<dbReference type="Proteomes" id="UP000000763">
    <property type="component" value="Chromosome 8"/>
</dbReference>
<dbReference type="Proteomes" id="UP000007752">
    <property type="component" value="Chromosome 8"/>
</dbReference>
<dbReference type="Proteomes" id="UP000059680">
    <property type="component" value="Chromosome 8"/>
</dbReference>
<dbReference type="ExpressionAtlas" id="Q2HWG0">
    <property type="expression patterns" value="baseline and differential"/>
</dbReference>
<dbReference type="GO" id="GO:0009736">
    <property type="term" value="P:cytokinin-activated signaling pathway"/>
    <property type="evidence" value="ECO:0007669"/>
    <property type="project" value="UniProtKB-KW"/>
</dbReference>
<dbReference type="GO" id="GO:0000160">
    <property type="term" value="P:phosphorelay signal transduction system"/>
    <property type="evidence" value="ECO:0007669"/>
    <property type="project" value="UniProtKB-KW"/>
</dbReference>
<dbReference type="CDD" id="cd17581">
    <property type="entry name" value="REC_typeA_ARR"/>
    <property type="match status" value="1"/>
</dbReference>
<dbReference type="Gene3D" id="3.40.50.2300">
    <property type="match status" value="1"/>
</dbReference>
<dbReference type="InterPro" id="IPR045279">
    <property type="entry name" value="ARR-like"/>
</dbReference>
<dbReference type="InterPro" id="IPR011006">
    <property type="entry name" value="CheY-like_superfamily"/>
</dbReference>
<dbReference type="InterPro" id="IPR001789">
    <property type="entry name" value="Sig_transdc_resp-reg_receiver"/>
</dbReference>
<dbReference type="PANTHER" id="PTHR43874">
    <property type="entry name" value="TWO-COMPONENT RESPONSE REGULATOR"/>
    <property type="match status" value="1"/>
</dbReference>
<dbReference type="PANTHER" id="PTHR43874:SF33">
    <property type="entry name" value="TWO-COMPONENT RESPONSE REGULATOR ORR8"/>
    <property type="match status" value="1"/>
</dbReference>
<dbReference type="Pfam" id="PF00072">
    <property type="entry name" value="Response_reg"/>
    <property type="match status" value="1"/>
</dbReference>
<dbReference type="SMART" id="SM00448">
    <property type="entry name" value="REC"/>
    <property type="match status" value="1"/>
</dbReference>
<dbReference type="SUPFAM" id="SSF52172">
    <property type="entry name" value="CheY-like"/>
    <property type="match status" value="1"/>
</dbReference>
<dbReference type="PROSITE" id="PS50110">
    <property type="entry name" value="RESPONSE_REGULATORY"/>
    <property type="match status" value="1"/>
</dbReference>
<comment type="function">
    <text evidence="1">Functions as a response regulator involved in His-to-Asp phosphorelay signal transduction system. Phosphorylation of the Asp residue in the receiver domain activates the ability of the protein to promote the transcription of target genes. Type-A response regulators seem to act as negative regulators of the cytokinin signaling.</text>
</comment>
<comment type="tissue specificity">
    <text evidence="4">Expressed in flowers and panicles.</text>
</comment>
<comment type="PTM">
    <text evidence="8">Two-component system major event consists of a His-to-Asp phosphorelay between a sensor histidine kinase (HK) and a response regulator (RR). In plants, the His-to-Asp phosphorelay involves an additional intermediate named Histidine-containing phosphotransfer protein (HPt). This multistep phosphorelay consists of a His-Asp-His-Asp sequential transfer of a phosphate group between first a His and an Asp of the HK protein, followed by the transfer to a conserved His of the HPt protein and finally the transfer to an Asp in the receiver domain of the RR protein.</text>
</comment>
<comment type="disruption phenotype">
    <text evidence="3">Dwarf, narrow leaf and low tillering phenotypes.</text>
</comment>
<comment type="similarity">
    <text evidence="8">Belongs to the ARR family. Type-A subfamily.</text>
</comment>
<comment type="sequence caution" evidence="8">
    <conflict type="erroneous gene model prediction">
        <sequence resource="EMBL-CDS" id="BAD03775"/>
    </conflict>
</comment>
<comment type="sequence caution" evidence="8">
    <conflict type="erroneous gene model prediction">
        <sequence resource="EMBL-CDS" id="BAH94264"/>
    </conflict>
</comment>
<comment type="sequence caution" evidence="8">
    <conflict type="erroneous gene model prediction">
        <sequence resource="EMBL-CDS" id="EAZ42468"/>
    </conflict>
</comment>
<comment type="sequence caution" evidence="8">
    <conflict type="erroneous gene model prediction">
        <sequence resource="EMBL-CDS" id="FAA00272"/>
    </conflict>
</comment>
<feature type="chain" id="PRO_0000433839" description="Two-component response regulator ORR13">
    <location>
        <begin position="1"/>
        <end position="121"/>
    </location>
</feature>
<feature type="domain" description="Response regulatory" evidence="2">
    <location>
        <begin position="5"/>
        <end position="121"/>
    </location>
</feature>
<feature type="modified residue" description="4-aspartylphosphate" evidence="2">
    <location>
        <position position="55"/>
    </location>
</feature>
<protein>
    <recommendedName>
        <fullName evidence="8">Two-component response regulator ORR13</fullName>
    </recommendedName>
    <alternativeName>
        <fullName evidence="6">OsRR13</fullName>
    </alternativeName>
    <alternativeName>
        <fullName evidence="5">OsRRA12</fullName>
    </alternativeName>
</protein>
<sequence>MSSPHVLVVDDTHVDRHVISMALMRHNVRVTAVESVMQALVFLDSEHDVNMIVSDYCMPEMTGYDLLMEVKKSPRLVHLPVIIASSDNIPERIRKCFDGGAKDYILKPVKIADVPRILNYI</sequence>
<evidence type="ECO:0000250" key="1">
    <source>
        <dbReference type="UniProtKB" id="Q9ZWS9"/>
    </source>
</evidence>
<evidence type="ECO:0000255" key="2">
    <source>
        <dbReference type="PROSITE-ProRule" id="PRU00169"/>
    </source>
</evidence>
<evidence type="ECO:0000269" key="3">
    <source>
    </source>
</evidence>
<evidence type="ECO:0000269" key="4">
    <source>
    </source>
</evidence>
<evidence type="ECO:0000303" key="5">
    <source>
    </source>
</evidence>
<evidence type="ECO:0000303" key="6">
    <source>
    </source>
</evidence>
<evidence type="ECO:0000303" key="7">
    <source>
    </source>
</evidence>
<evidence type="ECO:0000305" key="8"/>
<evidence type="ECO:0000312" key="9">
    <source>
        <dbReference type="EMBL" id="BAH94264.1"/>
    </source>
</evidence>
<evidence type="ECO:0000312" key="10">
    <source>
        <dbReference type="EMBL" id="EAZ42468.1"/>
    </source>
</evidence>
<keyword id="KW-0932">Cytokinin signaling pathway</keyword>
<keyword id="KW-0597">Phosphoprotein</keyword>
<keyword id="KW-1185">Reference proteome</keyword>
<keyword id="KW-0804">Transcription</keyword>
<keyword id="KW-0805">Transcription regulation</keyword>
<keyword id="KW-0902">Two-component regulatory system</keyword>
<organism>
    <name type="scientific">Oryza sativa subsp. japonica</name>
    <name type="common">Rice</name>
    <dbReference type="NCBI Taxonomy" id="39947"/>
    <lineage>
        <taxon>Eukaryota</taxon>
        <taxon>Viridiplantae</taxon>
        <taxon>Streptophyta</taxon>
        <taxon>Embryophyta</taxon>
        <taxon>Tracheophyta</taxon>
        <taxon>Spermatophyta</taxon>
        <taxon>Magnoliopsida</taxon>
        <taxon>Liliopsida</taxon>
        <taxon>Poales</taxon>
        <taxon>Poaceae</taxon>
        <taxon>BOP clade</taxon>
        <taxon>Oryzoideae</taxon>
        <taxon>Oryzeae</taxon>
        <taxon>Oryzinae</taxon>
        <taxon>Oryza</taxon>
        <taxon>Oryza sativa</taxon>
    </lineage>
</organism>
<proteinExistence type="evidence at transcript level"/>